<accession>B8GWR2</accession>
<reference key="1">
    <citation type="journal article" date="2010" name="J. Bacteriol.">
        <title>The genetic basis of laboratory adaptation in Caulobacter crescentus.</title>
        <authorList>
            <person name="Marks M.E."/>
            <person name="Castro-Rojas C.M."/>
            <person name="Teiling C."/>
            <person name="Du L."/>
            <person name="Kapatral V."/>
            <person name="Walunas T.L."/>
            <person name="Crosson S."/>
        </authorList>
    </citation>
    <scope>NUCLEOTIDE SEQUENCE [LARGE SCALE GENOMIC DNA]</scope>
    <source>
        <strain>NA1000 / CB15N</strain>
    </source>
</reference>
<gene>
    <name evidence="1" type="primary">fabZ</name>
    <name type="ordered locus">CCNA_01989</name>
</gene>
<protein>
    <recommendedName>
        <fullName evidence="1">3-hydroxyacyl-[acyl-carrier-protein] dehydratase FabZ</fullName>
        <ecNumber evidence="1">4.2.1.59</ecNumber>
    </recommendedName>
    <alternativeName>
        <fullName evidence="1">(3R)-hydroxymyristoyl-[acyl-carrier-protein] dehydratase</fullName>
        <shortName evidence="1">(3R)-hydroxymyristoyl-ACP dehydrase</shortName>
    </alternativeName>
    <alternativeName>
        <fullName evidence="1">Beta-hydroxyacyl-ACP dehydratase</fullName>
    </alternativeName>
</protein>
<keyword id="KW-0963">Cytoplasm</keyword>
<keyword id="KW-0441">Lipid A biosynthesis</keyword>
<keyword id="KW-0444">Lipid biosynthesis</keyword>
<keyword id="KW-0443">Lipid metabolism</keyword>
<keyword id="KW-0456">Lyase</keyword>
<keyword id="KW-1185">Reference proteome</keyword>
<dbReference type="EC" id="4.2.1.59" evidence="1"/>
<dbReference type="EMBL" id="CP001340">
    <property type="protein sequence ID" value="ACL95454.1"/>
    <property type="molecule type" value="Genomic_DNA"/>
</dbReference>
<dbReference type="RefSeq" id="WP_010919778.1">
    <property type="nucleotide sequence ID" value="NC_011916.1"/>
</dbReference>
<dbReference type="RefSeq" id="YP_002517362.1">
    <property type="nucleotide sequence ID" value="NC_011916.1"/>
</dbReference>
<dbReference type="SMR" id="B8GWR2"/>
<dbReference type="GeneID" id="7333642"/>
<dbReference type="KEGG" id="ccs:CCNA_01989"/>
<dbReference type="PATRIC" id="fig|565050.3.peg.1948"/>
<dbReference type="HOGENOM" id="CLU_078912_1_0_5"/>
<dbReference type="OrthoDB" id="9772788at2"/>
<dbReference type="PhylomeDB" id="B8GWR2"/>
<dbReference type="Proteomes" id="UP000001364">
    <property type="component" value="Chromosome"/>
</dbReference>
<dbReference type="GO" id="GO:0005737">
    <property type="term" value="C:cytoplasm"/>
    <property type="evidence" value="ECO:0007669"/>
    <property type="project" value="UniProtKB-SubCell"/>
</dbReference>
<dbReference type="GO" id="GO:0016020">
    <property type="term" value="C:membrane"/>
    <property type="evidence" value="ECO:0007669"/>
    <property type="project" value="GOC"/>
</dbReference>
<dbReference type="GO" id="GO:0019171">
    <property type="term" value="F:(3R)-hydroxyacyl-[acyl-carrier-protein] dehydratase activity"/>
    <property type="evidence" value="ECO:0007669"/>
    <property type="project" value="UniProtKB-EC"/>
</dbReference>
<dbReference type="GO" id="GO:0006633">
    <property type="term" value="P:fatty acid biosynthetic process"/>
    <property type="evidence" value="ECO:0007669"/>
    <property type="project" value="UniProtKB-UniRule"/>
</dbReference>
<dbReference type="GO" id="GO:0009245">
    <property type="term" value="P:lipid A biosynthetic process"/>
    <property type="evidence" value="ECO:0007669"/>
    <property type="project" value="UniProtKB-UniRule"/>
</dbReference>
<dbReference type="CDD" id="cd01288">
    <property type="entry name" value="FabZ"/>
    <property type="match status" value="1"/>
</dbReference>
<dbReference type="FunFam" id="3.10.129.10:FF:000001">
    <property type="entry name" value="3-hydroxyacyl-[acyl-carrier-protein] dehydratase FabZ"/>
    <property type="match status" value="1"/>
</dbReference>
<dbReference type="Gene3D" id="3.10.129.10">
    <property type="entry name" value="Hotdog Thioesterase"/>
    <property type="match status" value="1"/>
</dbReference>
<dbReference type="HAMAP" id="MF_00406">
    <property type="entry name" value="FabZ"/>
    <property type="match status" value="1"/>
</dbReference>
<dbReference type="InterPro" id="IPR013114">
    <property type="entry name" value="FabA_FabZ"/>
</dbReference>
<dbReference type="InterPro" id="IPR010084">
    <property type="entry name" value="FabZ"/>
</dbReference>
<dbReference type="InterPro" id="IPR029069">
    <property type="entry name" value="HotDog_dom_sf"/>
</dbReference>
<dbReference type="NCBIfam" id="TIGR01750">
    <property type="entry name" value="fabZ"/>
    <property type="match status" value="1"/>
</dbReference>
<dbReference type="NCBIfam" id="NF000582">
    <property type="entry name" value="PRK00006.1"/>
    <property type="match status" value="1"/>
</dbReference>
<dbReference type="PANTHER" id="PTHR30272">
    <property type="entry name" value="3-HYDROXYACYL-[ACYL-CARRIER-PROTEIN] DEHYDRATASE"/>
    <property type="match status" value="1"/>
</dbReference>
<dbReference type="PANTHER" id="PTHR30272:SF1">
    <property type="entry name" value="3-HYDROXYACYL-[ACYL-CARRIER-PROTEIN] DEHYDRATASE"/>
    <property type="match status" value="1"/>
</dbReference>
<dbReference type="Pfam" id="PF07977">
    <property type="entry name" value="FabA"/>
    <property type="match status" value="1"/>
</dbReference>
<dbReference type="SUPFAM" id="SSF54637">
    <property type="entry name" value="Thioesterase/thiol ester dehydrase-isomerase"/>
    <property type="match status" value="1"/>
</dbReference>
<sequence>MGDNAEQAVQTDIDIAEILARIPHRYPFLLVDRAEDYNPHQSIVGIKCVTINEPFFQGHFPGNPVMPGVLIIEALAQTGAVLMSKSLEVDTEGKTIFFMSVDNARFRNPVRPGDVIRMEVEVLRARSSIFKFKGVAKVGDKVAAEAEFAAMVVETGPKA</sequence>
<name>FABZ_CAUVN</name>
<feature type="chain" id="PRO_1000134693" description="3-hydroxyacyl-[acyl-carrier-protein] dehydratase FabZ">
    <location>
        <begin position="1"/>
        <end position="159"/>
    </location>
</feature>
<feature type="active site" evidence="1">
    <location>
        <position position="59"/>
    </location>
</feature>
<organism>
    <name type="scientific">Caulobacter vibrioides (strain NA1000 / CB15N)</name>
    <name type="common">Caulobacter crescentus</name>
    <dbReference type="NCBI Taxonomy" id="565050"/>
    <lineage>
        <taxon>Bacteria</taxon>
        <taxon>Pseudomonadati</taxon>
        <taxon>Pseudomonadota</taxon>
        <taxon>Alphaproteobacteria</taxon>
        <taxon>Caulobacterales</taxon>
        <taxon>Caulobacteraceae</taxon>
        <taxon>Caulobacter</taxon>
    </lineage>
</organism>
<proteinExistence type="inferred from homology"/>
<evidence type="ECO:0000255" key="1">
    <source>
        <dbReference type="HAMAP-Rule" id="MF_00406"/>
    </source>
</evidence>
<comment type="function">
    <text evidence="1">Involved in unsaturated fatty acids biosynthesis. Catalyzes the dehydration of short chain beta-hydroxyacyl-ACPs and long chain saturated and unsaturated beta-hydroxyacyl-ACPs.</text>
</comment>
<comment type="catalytic activity">
    <reaction evidence="1">
        <text>a (3R)-hydroxyacyl-[ACP] = a (2E)-enoyl-[ACP] + H2O</text>
        <dbReference type="Rhea" id="RHEA:13097"/>
        <dbReference type="Rhea" id="RHEA-COMP:9925"/>
        <dbReference type="Rhea" id="RHEA-COMP:9945"/>
        <dbReference type="ChEBI" id="CHEBI:15377"/>
        <dbReference type="ChEBI" id="CHEBI:78784"/>
        <dbReference type="ChEBI" id="CHEBI:78827"/>
        <dbReference type="EC" id="4.2.1.59"/>
    </reaction>
</comment>
<comment type="subcellular location">
    <subcellularLocation>
        <location evidence="1">Cytoplasm</location>
    </subcellularLocation>
</comment>
<comment type="similarity">
    <text evidence="1">Belongs to the thioester dehydratase family. FabZ subfamily.</text>
</comment>